<reference key="1">
    <citation type="submission" date="2008-10" db="EMBL/GenBank/DDBJ databases">
        <title>Genome sequence of Bacillus cereus AH820.</title>
        <authorList>
            <person name="Dodson R.J."/>
            <person name="Durkin A.S."/>
            <person name="Rosovitz M.J."/>
            <person name="Rasko D.A."/>
            <person name="Hoffmaster A."/>
            <person name="Ravel J."/>
            <person name="Sutton G."/>
        </authorList>
    </citation>
    <scope>NUCLEOTIDE SEQUENCE [LARGE SCALE GENOMIC DNA]</scope>
    <source>
        <strain>AH820</strain>
    </source>
</reference>
<dbReference type="EC" id="1.2.1.41" evidence="1"/>
<dbReference type="EMBL" id="CP001283">
    <property type="protein sequence ID" value="ACK92132.1"/>
    <property type="molecule type" value="Genomic_DNA"/>
</dbReference>
<dbReference type="RefSeq" id="WP_001006634.1">
    <property type="nucleotide sequence ID" value="NC_011773.1"/>
</dbReference>
<dbReference type="SMR" id="B7JD15"/>
<dbReference type="KEGG" id="bcu:BCAH820_2988"/>
<dbReference type="HOGENOM" id="CLU_030231_0_0_9"/>
<dbReference type="UniPathway" id="UPA00098">
    <property type="reaction ID" value="UER00360"/>
</dbReference>
<dbReference type="Proteomes" id="UP000001363">
    <property type="component" value="Chromosome"/>
</dbReference>
<dbReference type="GO" id="GO:0005737">
    <property type="term" value="C:cytoplasm"/>
    <property type="evidence" value="ECO:0007669"/>
    <property type="project" value="UniProtKB-SubCell"/>
</dbReference>
<dbReference type="GO" id="GO:0004350">
    <property type="term" value="F:glutamate-5-semialdehyde dehydrogenase activity"/>
    <property type="evidence" value="ECO:0007669"/>
    <property type="project" value="UniProtKB-UniRule"/>
</dbReference>
<dbReference type="GO" id="GO:0050661">
    <property type="term" value="F:NADP binding"/>
    <property type="evidence" value="ECO:0007669"/>
    <property type="project" value="InterPro"/>
</dbReference>
<dbReference type="GO" id="GO:0055129">
    <property type="term" value="P:L-proline biosynthetic process"/>
    <property type="evidence" value="ECO:0007669"/>
    <property type="project" value="UniProtKB-UniRule"/>
</dbReference>
<dbReference type="CDD" id="cd07079">
    <property type="entry name" value="ALDH_F18-19_ProA-GPR"/>
    <property type="match status" value="1"/>
</dbReference>
<dbReference type="FunFam" id="3.40.309.10:FF:000006">
    <property type="entry name" value="Gamma-glutamyl phosphate reductase"/>
    <property type="match status" value="1"/>
</dbReference>
<dbReference type="Gene3D" id="3.40.605.10">
    <property type="entry name" value="Aldehyde Dehydrogenase, Chain A, domain 1"/>
    <property type="match status" value="1"/>
</dbReference>
<dbReference type="Gene3D" id="3.40.309.10">
    <property type="entry name" value="Aldehyde Dehydrogenase, Chain A, domain 2"/>
    <property type="match status" value="1"/>
</dbReference>
<dbReference type="HAMAP" id="MF_00412">
    <property type="entry name" value="ProA"/>
    <property type="match status" value="1"/>
</dbReference>
<dbReference type="InterPro" id="IPR016161">
    <property type="entry name" value="Ald_DH/histidinol_DH"/>
</dbReference>
<dbReference type="InterPro" id="IPR016163">
    <property type="entry name" value="Ald_DH_C"/>
</dbReference>
<dbReference type="InterPro" id="IPR016162">
    <property type="entry name" value="Ald_DH_N"/>
</dbReference>
<dbReference type="InterPro" id="IPR015590">
    <property type="entry name" value="Aldehyde_DH_dom"/>
</dbReference>
<dbReference type="InterPro" id="IPR020593">
    <property type="entry name" value="G-glutamylP_reductase_CS"/>
</dbReference>
<dbReference type="InterPro" id="IPR012134">
    <property type="entry name" value="Glu-5-SA_DH"/>
</dbReference>
<dbReference type="InterPro" id="IPR000965">
    <property type="entry name" value="GPR_dom"/>
</dbReference>
<dbReference type="NCBIfam" id="NF001221">
    <property type="entry name" value="PRK00197.1"/>
    <property type="match status" value="1"/>
</dbReference>
<dbReference type="NCBIfam" id="TIGR00407">
    <property type="entry name" value="proA"/>
    <property type="match status" value="1"/>
</dbReference>
<dbReference type="PANTHER" id="PTHR11063:SF8">
    <property type="entry name" value="DELTA-1-PYRROLINE-5-CARBOXYLATE SYNTHASE"/>
    <property type="match status" value="1"/>
</dbReference>
<dbReference type="PANTHER" id="PTHR11063">
    <property type="entry name" value="GLUTAMATE SEMIALDEHYDE DEHYDROGENASE"/>
    <property type="match status" value="1"/>
</dbReference>
<dbReference type="Pfam" id="PF00171">
    <property type="entry name" value="Aldedh"/>
    <property type="match status" value="1"/>
</dbReference>
<dbReference type="PIRSF" id="PIRSF000151">
    <property type="entry name" value="GPR"/>
    <property type="match status" value="1"/>
</dbReference>
<dbReference type="SUPFAM" id="SSF53720">
    <property type="entry name" value="ALDH-like"/>
    <property type="match status" value="1"/>
</dbReference>
<dbReference type="PROSITE" id="PS01223">
    <property type="entry name" value="PROA"/>
    <property type="match status" value="1"/>
</dbReference>
<sequence>MNEVLAKGKKAKEIARELVLKSTEQKNEALSAIADQLILETAYILEENKKDIEEGKAKGFSDSLLDRLMLNEQRIVDMTEGIKQLIELRDPVGECVSAWERPNGLSIQEMRVPLGVVGMIYEARPNVTVDAATICLKTGNAVILRGSSSAIHSNKAIVAVIHRALKQTSLPQESVQLIEDTTRDSAKQLFTMNDYLDVLIPRGGKQLIDTVVREASVPVLETGAGNCHVFIDETADKQMAFDIIINAKTQRPSVCNAIETIVLHEKWAEQYGSELFSSLKKRGVELRGDQKALAMDSSIVLASEEDWGTEFLSLTLAVKLVSSIEEAIHHINTYGSMHSEAIISENEENVSKFFVSVDAAALYHNASTRFTDGSEFGFGAEIGISTQKLHVRGPMGLPALTSTKYVIRGNGQIRK</sequence>
<gene>
    <name evidence="1" type="primary">proA</name>
    <name type="ordered locus">BCAH820_2988</name>
</gene>
<feature type="chain" id="PRO_1000123776" description="Gamma-glutamyl phosphate reductase">
    <location>
        <begin position="1"/>
        <end position="415"/>
    </location>
</feature>
<evidence type="ECO:0000255" key="1">
    <source>
        <dbReference type="HAMAP-Rule" id="MF_00412"/>
    </source>
</evidence>
<organism>
    <name type="scientific">Bacillus cereus (strain AH820)</name>
    <dbReference type="NCBI Taxonomy" id="405535"/>
    <lineage>
        <taxon>Bacteria</taxon>
        <taxon>Bacillati</taxon>
        <taxon>Bacillota</taxon>
        <taxon>Bacilli</taxon>
        <taxon>Bacillales</taxon>
        <taxon>Bacillaceae</taxon>
        <taxon>Bacillus</taxon>
        <taxon>Bacillus cereus group</taxon>
    </lineage>
</organism>
<protein>
    <recommendedName>
        <fullName evidence="1">Gamma-glutamyl phosphate reductase</fullName>
        <shortName evidence="1">GPR</shortName>
        <ecNumber evidence="1">1.2.1.41</ecNumber>
    </recommendedName>
    <alternativeName>
        <fullName evidence="1">Glutamate-5-semialdehyde dehydrogenase</fullName>
    </alternativeName>
    <alternativeName>
        <fullName evidence="1">Glutamyl-gamma-semialdehyde dehydrogenase</fullName>
        <shortName evidence="1">GSA dehydrogenase</shortName>
    </alternativeName>
</protein>
<keyword id="KW-0028">Amino-acid biosynthesis</keyword>
<keyword id="KW-0963">Cytoplasm</keyword>
<keyword id="KW-0521">NADP</keyword>
<keyword id="KW-0560">Oxidoreductase</keyword>
<keyword id="KW-0641">Proline biosynthesis</keyword>
<proteinExistence type="inferred from homology"/>
<accession>B7JD15</accession>
<comment type="function">
    <text evidence="1">Catalyzes the NADPH-dependent reduction of L-glutamate 5-phosphate into L-glutamate 5-semialdehyde and phosphate. The product spontaneously undergoes cyclization to form 1-pyrroline-5-carboxylate.</text>
</comment>
<comment type="catalytic activity">
    <reaction evidence="1">
        <text>L-glutamate 5-semialdehyde + phosphate + NADP(+) = L-glutamyl 5-phosphate + NADPH + H(+)</text>
        <dbReference type="Rhea" id="RHEA:19541"/>
        <dbReference type="ChEBI" id="CHEBI:15378"/>
        <dbReference type="ChEBI" id="CHEBI:43474"/>
        <dbReference type="ChEBI" id="CHEBI:57783"/>
        <dbReference type="ChEBI" id="CHEBI:58066"/>
        <dbReference type="ChEBI" id="CHEBI:58274"/>
        <dbReference type="ChEBI" id="CHEBI:58349"/>
        <dbReference type="EC" id="1.2.1.41"/>
    </reaction>
</comment>
<comment type="pathway">
    <text evidence="1">Amino-acid biosynthesis; L-proline biosynthesis; L-glutamate 5-semialdehyde from L-glutamate: step 2/2.</text>
</comment>
<comment type="subcellular location">
    <subcellularLocation>
        <location evidence="1">Cytoplasm</location>
    </subcellularLocation>
</comment>
<comment type="similarity">
    <text evidence="1">Belongs to the gamma-glutamyl phosphate reductase family.</text>
</comment>
<name>PROA_BACC0</name>